<accession>Q8AV98</accession>
<accession>Q9PRT1</accession>
<evidence type="ECO:0000255" key="1">
    <source>
        <dbReference type="PROSITE-ProRule" id="PRU00040"/>
    </source>
</evidence>
<evidence type="ECO:0000269" key="2">
    <source>
    </source>
</evidence>
<evidence type="ECO:0000269" key="3">
    <source>
    </source>
</evidence>
<evidence type="ECO:0000269" key="4">
    <source>
    </source>
</evidence>
<evidence type="ECO:0000269" key="5">
    <source>
    </source>
</evidence>
<evidence type="ECO:0000305" key="6"/>
<evidence type="ECO:0000305" key="7">
    <source>
    </source>
</evidence>
<evidence type="ECO:0007829" key="8">
    <source>
        <dbReference type="PDB" id="1C3A"/>
    </source>
</evidence>
<keyword id="KW-0002">3D-structure</keyword>
<keyword id="KW-0903">Direct protein sequencing</keyword>
<keyword id="KW-1015">Disulfide bond</keyword>
<keyword id="KW-1199">Hemostasis impairing toxin</keyword>
<keyword id="KW-1201">Platelet aggregation inhibiting toxin</keyword>
<keyword id="KW-0964">Secreted</keyword>
<keyword id="KW-0732">Signal</keyword>
<keyword id="KW-0800">Toxin</keyword>
<name>SLAB_PROFL</name>
<organism>
    <name type="scientific">Protobothrops flavoviridis</name>
    <name type="common">Habu</name>
    <name type="synonym">Trimeresurus flavoviridis</name>
    <dbReference type="NCBI Taxonomy" id="88087"/>
    <lineage>
        <taxon>Eukaryota</taxon>
        <taxon>Metazoa</taxon>
        <taxon>Chordata</taxon>
        <taxon>Craniata</taxon>
        <taxon>Vertebrata</taxon>
        <taxon>Euteleostomi</taxon>
        <taxon>Lepidosauria</taxon>
        <taxon>Squamata</taxon>
        <taxon>Bifurcata</taxon>
        <taxon>Unidentata</taxon>
        <taxon>Episquamata</taxon>
        <taxon>Toxicofera</taxon>
        <taxon>Serpentes</taxon>
        <taxon>Colubroidea</taxon>
        <taxon>Viperidae</taxon>
        <taxon>Crotalinae</taxon>
        <taxon>Protobothrops</taxon>
    </lineage>
</organism>
<proteinExistence type="evidence at protein level"/>
<sequence length="148" mass="16932">MGQFIFVSFGFLVVATSLSGTEAGFCCPLGWSSYDEHCYQVFQQKMNWEDAEKFCTQQHKGSHLVSFHSSEEVDFVTSKTFPILKYDFVWIGLSNVWNECTKEWSDGTKLDYKAWSGGSDCIVSKTTDNQWLSMDCSSKRYVVCKFQA</sequence>
<comment type="function">
    <text evidence="3 5">Strong platelet aggregation inhibitor. Binds specifically to platelet glycoprotein Ibalpha (GP1BA) with high affinity and inhibits vWF-dependent platelet aggregation (PubMed:7599152). Has also been observed to induce small agglutinates in washed platelets by binding to GPIb (PubMed:10688335).</text>
</comment>
<comment type="subunit">
    <text evidence="2">Tetramer of heterodimers of alpha and beta subunits (alphabeta)(4); disulfide-linked.</text>
</comment>
<comment type="subcellular location">
    <subcellularLocation>
        <location>Secreted</location>
    </subcellularLocation>
</comment>
<comment type="tissue specificity">
    <text>Expressed by the venom gland.</text>
</comment>
<comment type="miscellaneous">
    <text evidence="7">Negative results: has no effect on ADP- and collagen-induced platelet aggregation in platelet rich plasma.</text>
</comment>
<comment type="similarity">
    <text evidence="6">Belongs to the snaclec family.</text>
</comment>
<protein>
    <recommendedName>
        <fullName>Snaclec flavocetin-A subunit beta</fullName>
        <shortName>FL-A subunit beta</shortName>
    </recommendedName>
</protein>
<reference key="1">
    <citation type="journal article" date="2000" name="Thromb. Res.">
        <title>Molecular cloning of glycoprotein Ib-binding protein, flavocetin-A, which inhibits platelet aggregation.</title>
        <authorList>
            <person name="Shin Y."/>
            <person name="Okuyama I."/>
            <person name="Hasegawa J."/>
            <person name="Morita T."/>
        </authorList>
    </citation>
    <scope>NUCLEOTIDE SEQUENCE [MRNA]</scope>
    <scope>PROTEIN SEQUENCE OF 24-45; 46-53; 61-79; 80-85; 86-102; 103-109; 114-125; 126-139 AND 140-145</scope>
    <source>
        <tissue>Venom</tissue>
        <tissue>Venom gland</tissue>
    </source>
</reference>
<reference key="2">
    <citation type="journal article" date="1995" name="Biochim. Biophys. Acta">
        <title>Flavocetin-A and -B, two high molecular mass glycoprotein Ib binding proteins with high affinity purified from Trimeresurus flavoviridis venom, inhibit platelet aggregation at high shear stress.</title>
        <authorList>
            <person name="Taniuchi Y."/>
            <person name="Kawasaki T."/>
            <person name="Fujimura Y."/>
            <person name="Suzuki M."/>
            <person name="Titani K."/>
            <person name="Sakai Y."/>
            <person name="Kaku S."/>
            <person name="Hisamichi N."/>
            <person name="Satoh N."/>
            <person name="Takenaka T."/>
        </authorList>
    </citation>
    <scope>PROTEIN SEQUENCE OF 24-60</scope>
    <scope>FUNCTION</scope>
    <source>
        <tissue>Venom</tissue>
    </source>
</reference>
<reference key="3">
    <citation type="journal article" date="2000" name="Thromb. Res.">
        <title>The high molecular mass, glycoprotein Ib-binding protein flavocetin-A induces only small platelet aggregates in vitro.</title>
        <authorList>
            <person name="Taniuchi Y."/>
            <person name="Kawasaki T."/>
            <person name="Fujimura Y."/>
        </authorList>
    </citation>
    <scope>FUNCTION</scope>
</reference>
<reference key="4">
    <citation type="journal article" date="1999" name="Acta Crystallogr. D">
        <title>Crystallization and preliminary x-ray studies of flavocetin-A, a platelet glycoprotein Ib-binding protein from the habu snake venom.</title>
        <authorList>
            <person name="Fukuda K."/>
            <person name="Mizuno H."/>
            <person name="Atoda H."/>
            <person name="Morita T."/>
        </authorList>
    </citation>
    <scope>CRYSTALLIZATION</scope>
</reference>
<reference key="5">
    <citation type="journal article" date="2000" name="Biochemistry">
        <title>Crystal structure of flavocetin-A, a platelet glycoprotein Ib-binding protein, reveals a novel cyclic tetramer of C-type lectin-like heterodimers.</title>
        <authorList>
            <person name="Fukuda K."/>
            <person name="Mizuno H."/>
            <person name="Atoda H."/>
            <person name="Morita T."/>
        </authorList>
    </citation>
    <scope>X-RAY CRYSTALLOGRAPHY (2.5 ANGSTROMS) OF 24-148</scope>
    <scope>SUBUNIT</scope>
    <scope>DISULFIDE BONDS</scope>
</reference>
<feature type="signal peptide" evidence="4 5">
    <location>
        <begin position="1"/>
        <end position="23"/>
    </location>
</feature>
<feature type="chain" id="PRO_0000355294" description="Snaclec flavocetin-A subunit beta">
    <location>
        <begin position="24"/>
        <end position="148"/>
    </location>
</feature>
<feature type="domain" description="C-type lectin" evidence="1">
    <location>
        <begin position="34"/>
        <end position="145"/>
    </location>
</feature>
<feature type="disulfide bond" description="Interchain (with C-158 in subunit alpha of tetrameric partner)" evidence="1 2">
    <location>
        <position position="26"/>
    </location>
</feature>
<feature type="disulfide bond" evidence="1 2">
    <location>
        <begin position="27"/>
        <end position="38"/>
    </location>
</feature>
<feature type="disulfide bond" evidence="1 2">
    <location>
        <begin position="55"/>
        <end position="144"/>
    </location>
</feature>
<feature type="disulfide bond" description="Interchain (with C-104 in subunit alpha of heterodimeric partner)" evidence="1 2">
    <location>
        <position position="100"/>
    </location>
</feature>
<feature type="disulfide bond" evidence="1 2">
    <location>
        <begin position="121"/>
        <end position="136"/>
    </location>
</feature>
<feature type="sequence conflict" description="In Ref. 2; AA sequence." evidence="6" ref="2">
    <original>QQ</original>
    <variation>PP</variation>
    <location>
        <begin position="43"/>
        <end position="44"/>
    </location>
</feature>
<feature type="strand" evidence="8">
    <location>
        <begin position="32"/>
        <end position="34"/>
    </location>
</feature>
<feature type="strand" evidence="8">
    <location>
        <begin position="37"/>
        <end position="46"/>
    </location>
</feature>
<feature type="helix" evidence="8">
    <location>
        <begin position="48"/>
        <end position="58"/>
    </location>
</feature>
<feature type="helix" evidence="8">
    <location>
        <begin position="70"/>
        <end position="84"/>
    </location>
</feature>
<feature type="strand" evidence="8">
    <location>
        <begin position="88"/>
        <end position="90"/>
    </location>
</feature>
<feature type="strand" evidence="8">
    <location>
        <begin position="98"/>
        <end position="100"/>
    </location>
</feature>
<feature type="strand" evidence="8">
    <location>
        <begin position="102"/>
        <end position="104"/>
    </location>
</feature>
<feature type="strand" evidence="8">
    <location>
        <begin position="120"/>
        <end position="129"/>
    </location>
</feature>
<feature type="strand" evidence="8">
    <location>
        <begin position="131"/>
        <end position="135"/>
    </location>
</feature>
<feature type="strand" evidence="8">
    <location>
        <begin position="140"/>
        <end position="147"/>
    </location>
</feature>
<dbReference type="EMBL" id="AY149340">
    <property type="protein sequence ID" value="AAN72437.1"/>
    <property type="molecule type" value="mRNA"/>
</dbReference>
<dbReference type="PIR" id="S55679">
    <property type="entry name" value="S55679"/>
</dbReference>
<dbReference type="PDB" id="1C3A">
    <property type="method" value="X-ray"/>
    <property type="resolution" value="2.50 A"/>
    <property type="chains" value="B=24-148"/>
</dbReference>
<dbReference type="PDBsum" id="1C3A"/>
<dbReference type="SMR" id="Q8AV98"/>
<dbReference type="EvolutionaryTrace" id="Q8AV98"/>
<dbReference type="GO" id="GO:0005576">
    <property type="term" value="C:extracellular region"/>
    <property type="evidence" value="ECO:0007669"/>
    <property type="project" value="UniProtKB-SubCell"/>
</dbReference>
<dbReference type="GO" id="GO:0090729">
    <property type="term" value="F:toxin activity"/>
    <property type="evidence" value="ECO:0007669"/>
    <property type="project" value="UniProtKB-KW"/>
</dbReference>
<dbReference type="FunFam" id="3.10.100.10:FF:000087">
    <property type="entry name" value="Snaclec rhodocetin subunit delta"/>
    <property type="match status" value="1"/>
</dbReference>
<dbReference type="Gene3D" id="3.10.100.10">
    <property type="entry name" value="Mannose-Binding Protein A, subunit A"/>
    <property type="match status" value="1"/>
</dbReference>
<dbReference type="InterPro" id="IPR001304">
    <property type="entry name" value="C-type_lectin-like"/>
</dbReference>
<dbReference type="InterPro" id="IPR016186">
    <property type="entry name" value="C-type_lectin-like/link_sf"/>
</dbReference>
<dbReference type="InterPro" id="IPR050111">
    <property type="entry name" value="C-type_lectin/snaclec_domain"/>
</dbReference>
<dbReference type="InterPro" id="IPR018378">
    <property type="entry name" value="C-type_lectin_CS"/>
</dbReference>
<dbReference type="InterPro" id="IPR016187">
    <property type="entry name" value="CTDL_fold"/>
</dbReference>
<dbReference type="PANTHER" id="PTHR22803">
    <property type="entry name" value="MANNOSE, PHOSPHOLIPASE, LECTIN RECEPTOR RELATED"/>
    <property type="match status" value="1"/>
</dbReference>
<dbReference type="Pfam" id="PF00059">
    <property type="entry name" value="Lectin_C"/>
    <property type="match status" value="1"/>
</dbReference>
<dbReference type="PRINTS" id="PR01504">
    <property type="entry name" value="PNCREATITSAP"/>
</dbReference>
<dbReference type="SMART" id="SM00034">
    <property type="entry name" value="CLECT"/>
    <property type="match status" value="1"/>
</dbReference>
<dbReference type="SUPFAM" id="SSF56436">
    <property type="entry name" value="C-type lectin-like"/>
    <property type="match status" value="1"/>
</dbReference>
<dbReference type="PROSITE" id="PS00615">
    <property type="entry name" value="C_TYPE_LECTIN_1"/>
    <property type="match status" value="1"/>
</dbReference>
<dbReference type="PROSITE" id="PS50041">
    <property type="entry name" value="C_TYPE_LECTIN_2"/>
    <property type="match status" value="1"/>
</dbReference>